<name>RPO1C_PYRAB</name>
<protein>
    <recommendedName>
        <fullName evidence="1">DNA-directed RNA polymerase subunit Rpo1C</fullName>
        <ecNumber evidence="1">2.7.7.6</ecNumber>
    </recommendedName>
    <alternativeName>
        <fullName evidence="1">DNA-directed RNA polymerase subunit A''</fullName>
    </alternativeName>
</protein>
<proteinExistence type="inferred from homology"/>
<gene>
    <name evidence="1" type="primary">rpo1C</name>
    <name evidence="1" type="synonym">rpoA2</name>
    <name type="ordered locus">PYRAB06160</name>
    <name type="ORF">PAB0425</name>
</gene>
<comment type="function">
    <text evidence="1">DNA-dependent RNA polymerase (RNAP) catalyzes the transcription of DNA into RNA using the four ribonucleoside triphosphates as substrates. Forms part of the jaw domain.</text>
</comment>
<comment type="catalytic activity">
    <reaction evidence="1">
        <text>RNA(n) + a ribonucleoside 5'-triphosphate = RNA(n+1) + diphosphate</text>
        <dbReference type="Rhea" id="RHEA:21248"/>
        <dbReference type="Rhea" id="RHEA-COMP:14527"/>
        <dbReference type="Rhea" id="RHEA-COMP:17342"/>
        <dbReference type="ChEBI" id="CHEBI:33019"/>
        <dbReference type="ChEBI" id="CHEBI:61557"/>
        <dbReference type="ChEBI" id="CHEBI:140395"/>
        <dbReference type="EC" id="2.7.7.6"/>
    </reaction>
</comment>
<comment type="subunit">
    <text evidence="1">Part of the RNA polymerase complex.</text>
</comment>
<comment type="subcellular location">
    <subcellularLocation>
        <location evidence="1">Cytoplasm</location>
    </subcellularLocation>
</comment>
<comment type="similarity">
    <text evidence="1">Belongs to the RNA polymerase beta' chain family.</text>
</comment>
<reference key="1">
    <citation type="journal article" date="2003" name="Mol. Microbiol.">
        <title>An integrated analysis of the genome of the hyperthermophilic archaeon Pyrococcus abyssi.</title>
        <authorList>
            <person name="Cohen G.N."/>
            <person name="Barbe V."/>
            <person name="Flament D."/>
            <person name="Galperin M."/>
            <person name="Heilig R."/>
            <person name="Lecompte O."/>
            <person name="Poch O."/>
            <person name="Prieur D."/>
            <person name="Querellou J."/>
            <person name="Ripp R."/>
            <person name="Thierry J.-C."/>
            <person name="Van der Oost J."/>
            <person name="Weissenbach J."/>
            <person name="Zivanovic Y."/>
            <person name="Forterre P."/>
        </authorList>
    </citation>
    <scope>NUCLEOTIDE SEQUENCE [LARGE SCALE GENOMIC DNA]</scope>
    <source>
        <strain>GE5 / Orsay</strain>
    </source>
</reference>
<reference key="2">
    <citation type="journal article" date="2012" name="Curr. Microbiol.">
        <title>Re-annotation of two hyperthermophilic archaea Pyrococcus abyssi GE5 and Pyrococcus furiosus DSM 3638.</title>
        <authorList>
            <person name="Gao J."/>
            <person name="Wang J."/>
        </authorList>
    </citation>
    <scope>GENOME REANNOTATION</scope>
    <source>
        <strain>GE5 / Orsay</strain>
    </source>
</reference>
<keyword id="KW-0963">Cytoplasm</keyword>
<keyword id="KW-0238">DNA-binding</keyword>
<keyword id="KW-0240">DNA-directed RNA polymerase</keyword>
<keyword id="KW-0548">Nucleotidyltransferase</keyword>
<keyword id="KW-0804">Transcription</keyword>
<keyword id="KW-0808">Transferase</keyword>
<sequence>MVSSSTIKSLIEKKGKDLPESVKQELYEKLIKYNEKYKLTKAEVETIIDEVVKEYERALVEPGEAVGTVAAQSIGEPSTQMTLNTFHYAGVAEINVTLGLPRIIEIVDARKNPSTPMMTVYLDEEHRYDREKAEEVARRIEGTTLENLARTTTLDLINMEFIVEIDPERLEKSGLTMEKVLKKLQSSFKSAEFEMEGYTLIVRPKKFEKISDLRRLAEKVKKHRLKGLSGVGKTIVRKEGDEYVIYTEGSNFKQVLKVPGVDPTRTKTNNIHEIAEVLGIEAARNAIIEEIMNTMREQGLEVDIRHIMLVADIMTLDGVVRPIGRHGVVGEKASVLARAAFEITVQHLFEAAERGEVDNLSGVIENVLIGQPVPVGTGMVKLTMKLPLRPQKEKEEV</sequence>
<dbReference type="EC" id="2.7.7.6" evidence="1"/>
<dbReference type="EMBL" id="AJ248284">
    <property type="protein sequence ID" value="CAB49538.1"/>
    <property type="molecule type" value="Genomic_DNA"/>
</dbReference>
<dbReference type="EMBL" id="HE613800">
    <property type="protein sequence ID" value="CCE70008.1"/>
    <property type="molecule type" value="Genomic_DNA"/>
</dbReference>
<dbReference type="PIR" id="C75182">
    <property type="entry name" value="C75182"/>
</dbReference>
<dbReference type="RefSeq" id="WP_010867740.1">
    <property type="nucleotide sequence ID" value="NC_000868.1"/>
</dbReference>
<dbReference type="SMR" id="Q9V113"/>
<dbReference type="STRING" id="272844.PAB0425"/>
<dbReference type="KEGG" id="pab:PAB0425"/>
<dbReference type="PATRIC" id="fig|272844.11.peg.654"/>
<dbReference type="eggNOG" id="arCOG04256">
    <property type="taxonomic scope" value="Archaea"/>
</dbReference>
<dbReference type="HOGENOM" id="CLU_037097_1_0_2"/>
<dbReference type="OrthoDB" id="372142at2157"/>
<dbReference type="PhylomeDB" id="Q9V113"/>
<dbReference type="Proteomes" id="UP000000810">
    <property type="component" value="Chromosome"/>
</dbReference>
<dbReference type="Proteomes" id="UP000009139">
    <property type="component" value="Chromosome"/>
</dbReference>
<dbReference type="GO" id="GO:0005737">
    <property type="term" value="C:cytoplasm"/>
    <property type="evidence" value="ECO:0007669"/>
    <property type="project" value="UniProtKB-SubCell"/>
</dbReference>
<dbReference type="GO" id="GO:0000428">
    <property type="term" value="C:DNA-directed RNA polymerase complex"/>
    <property type="evidence" value="ECO:0007669"/>
    <property type="project" value="UniProtKB-KW"/>
</dbReference>
<dbReference type="GO" id="GO:0003677">
    <property type="term" value="F:DNA binding"/>
    <property type="evidence" value="ECO:0007669"/>
    <property type="project" value="UniProtKB-UniRule"/>
</dbReference>
<dbReference type="GO" id="GO:0003899">
    <property type="term" value="F:DNA-directed RNA polymerase activity"/>
    <property type="evidence" value="ECO:0007669"/>
    <property type="project" value="UniProtKB-UniRule"/>
</dbReference>
<dbReference type="GO" id="GO:0006351">
    <property type="term" value="P:DNA-templated transcription"/>
    <property type="evidence" value="ECO:0007669"/>
    <property type="project" value="UniProtKB-UniRule"/>
</dbReference>
<dbReference type="CDD" id="cd06528">
    <property type="entry name" value="RNAP_A"/>
    <property type="match status" value="1"/>
</dbReference>
<dbReference type="Gene3D" id="1.10.150.390">
    <property type="match status" value="1"/>
</dbReference>
<dbReference type="HAMAP" id="MF_00411">
    <property type="entry name" value="RNApol_arch_Rpo1C"/>
    <property type="match status" value="1"/>
</dbReference>
<dbReference type="InterPro" id="IPR045867">
    <property type="entry name" value="DNA-dir_RpoC_beta_prime"/>
</dbReference>
<dbReference type="InterPro" id="IPR007081">
    <property type="entry name" value="RNA_pol_Rpb1_5"/>
</dbReference>
<dbReference type="InterPro" id="IPR012757">
    <property type="entry name" value="RPO1C"/>
</dbReference>
<dbReference type="NCBIfam" id="TIGR02389">
    <property type="entry name" value="RNA_pol_rpoA2"/>
    <property type="match status" value="1"/>
</dbReference>
<dbReference type="PANTHER" id="PTHR19376">
    <property type="entry name" value="DNA-DIRECTED RNA POLYMERASE"/>
    <property type="match status" value="1"/>
</dbReference>
<dbReference type="PANTHER" id="PTHR19376:SF32">
    <property type="entry name" value="DNA-DIRECTED RNA POLYMERASE III SUBUNIT RPC1"/>
    <property type="match status" value="1"/>
</dbReference>
<dbReference type="Pfam" id="PF04998">
    <property type="entry name" value="RNA_pol_Rpb1_5"/>
    <property type="match status" value="1"/>
</dbReference>
<dbReference type="SUPFAM" id="SSF64484">
    <property type="entry name" value="beta and beta-prime subunits of DNA dependent RNA-polymerase"/>
    <property type="match status" value="1"/>
</dbReference>
<organism>
    <name type="scientific">Pyrococcus abyssi (strain GE5 / Orsay)</name>
    <dbReference type="NCBI Taxonomy" id="272844"/>
    <lineage>
        <taxon>Archaea</taxon>
        <taxon>Methanobacteriati</taxon>
        <taxon>Methanobacteriota</taxon>
        <taxon>Thermococci</taxon>
        <taxon>Thermococcales</taxon>
        <taxon>Thermococcaceae</taxon>
        <taxon>Pyrococcus</taxon>
    </lineage>
</organism>
<feature type="chain" id="PRO_0000074020" description="DNA-directed RNA polymerase subunit Rpo1C">
    <location>
        <begin position="1"/>
        <end position="397"/>
    </location>
</feature>
<accession>Q9V113</accession>
<accession>G8ZJ81</accession>
<evidence type="ECO:0000255" key="1">
    <source>
        <dbReference type="HAMAP-Rule" id="MF_00411"/>
    </source>
</evidence>